<proteinExistence type="inferred from homology"/>
<sequence>MALPDFSMRQLLEAGVHFGHQTHRWNPKMAPFIYGERNNIHILDLSQTVPLLNSALKVVSDTVARGGRVLYVGTKRQASDIIADAGNRSAQYYVNARWLGGMMTNWKTISNSIQRLRKLDELLAGEAQGFTKKERLNLEREREKLDRALGGIKDMGSVPDLMFIIDTNKEAIAIQEAKRLGIPVVAVIDSNCDPDQIDYPIPGNDDAARAIALYCDLIARAALDGIARQQGAMGIDVGAQVEAPVEPALQAPAEGA</sequence>
<comment type="similarity">
    <text evidence="1">Belongs to the universal ribosomal protein uS2 family.</text>
</comment>
<comment type="sequence caution" evidence="2">
    <conflict type="erroneous initiation">
        <sequence resource="EMBL-CDS" id="AAL52004"/>
    </conflict>
</comment>
<evidence type="ECO:0000255" key="1">
    <source>
        <dbReference type="HAMAP-Rule" id="MF_00291"/>
    </source>
</evidence>
<evidence type="ECO:0000305" key="2"/>
<organism>
    <name type="scientific">Brucella melitensis biotype 1 (strain ATCC 23456 / CCUG 17765 / NCTC 10094 / 16M)</name>
    <dbReference type="NCBI Taxonomy" id="224914"/>
    <lineage>
        <taxon>Bacteria</taxon>
        <taxon>Pseudomonadati</taxon>
        <taxon>Pseudomonadota</taxon>
        <taxon>Alphaproteobacteria</taxon>
        <taxon>Hyphomicrobiales</taxon>
        <taxon>Brucellaceae</taxon>
        <taxon>Brucella/Ochrobactrum group</taxon>
        <taxon>Brucella</taxon>
    </lineage>
</organism>
<protein>
    <recommendedName>
        <fullName evidence="1">Small ribosomal subunit protein uS2</fullName>
    </recommendedName>
    <alternativeName>
        <fullName evidence="2">30S ribosomal protein S2</fullName>
    </alternativeName>
</protein>
<keyword id="KW-0687">Ribonucleoprotein</keyword>
<keyword id="KW-0689">Ribosomal protein</keyword>
<feature type="chain" id="PRO_0000134140" description="Small ribosomal subunit protein uS2">
    <location>
        <begin position="1"/>
        <end position="256"/>
    </location>
</feature>
<gene>
    <name evidence="1" type="primary">rpsB</name>
    <name type="ordered locus">BMEI0823</name>
</gene>
<dbReference type="EMBL" id="AE008917">
    <property type="protein sequence ID" value="AAL52004.1"/>
    <property type="status" value="ALT_INIT"/>
    <property type="molecule type" value="Genomic_DNA"/>
</dbReference>
<dbReference type="PIR" id="AI3354">
    <property type="entry name" value="AI3354"/>
</dbReference>
<dbReference type="RefSeq" id="WP_011005167.1">
    <property type="nucleotide sequence ID" value="NC_003317.1"/>
</dbReference>
<dbReference type="SMR" id="Q8YHH6"/>
<dbReference type="GeneID" id="29593637"/>
<dbReference type="KEGG" id="bme:BMEI0823"/>
<dbReference type="eggNOG" id="COG0052">
    <property type="taxonomic scope" value="Bacteria"/>
</dbReference>
<dbReference type="PhylomeDB" id="Q8YHH6"/>
<dbReference type="Proteomes" id="UP000000419">
    <property type="component" value="Chromosome I"/>
</dbReference>
<dbReference type="GO" id="GO:0022627">
    <property type="term" value="C:cytosolic small ribosomal subunit"/>
    <property type="evidence" value="ECO:0007669"/>
    <property type="project" value="TreeGrafter"/>
</dbReference>
<dbReference type="GO" id="GO:0003735">
    <property type="term" value="F:structural constituent of ribosome"/>
    <property type="evidence" value="ECO:0007669"/>
    <property type="project" value="InterPro"/>
</dbReference>
<dbReference type="GO" id="GO:0006412">
    <property type="term" value="P:translation"/>
    <property type="evidence" value="ECO:0007669"/>
    <property type="project" value="UniProtKB-UniRule"/>
</dbReference>
<dbReference type="CDD" id="cd01425">
    <property type="entry name" value="RPS2"/>
    <property type="match status" value="1"/>
</dbReference>
<dbReference type="FunFam" id="1.10.287.610:FF:000001">
    <property type="entry name" value="30S ribosomal protein S2"/>
    <property type="match status" value="1"/>
</dbReference>
<dbReference type="Gene3D" id="3.40.50.10490">
    <property type="entry name" value="Glucose-6-phosphate isomerase like protein, domain 1"/>
    <property type="match status" value="1"/>
</dbReference>
<dbReference type="Gene3D" id="1.10.287.610">
    <property type="entry name" value="Helix hairpin bin"/>
    <property type="match status" value="1"/>
</dbReference>
<dbReference type="HAMAP" id="MF_00291_B">
    <property type="entry name" value="Ribosomal_uS2_B"/>
    <property type="match status" value="1"/>
</dbReference>
<dbReference type="InterPro" id="IPR001865">
    <property type="entry name" value="Ribosomal_uS2"/>
</dbReference>
<dbReference type="InterPro" id="IPR005706">
    <property type="entry name" value="Ribosomal_uS2_bac/mit/plastid"/>
</dbReference>
<dbReference type="InterPro" id="IPR018130">
    <property type="entry name" value="Ribosomal_uS2_CS"/>
</dbReference>
<dbReference type="InterPro" id="IPR023591">
    <property type="entry name" value="Ribosomal_uS2_flav_dom_sf"/>
</dbReference>
<dbReference type="NCBIfam" id="TIGR01011">
    <property type="entry name" value="rpsB_bact"/>
    <property type="match status" value="1"/>
</dbReference>
<dbReference type="PANTHER" id="PTHR12534">
    <property type="entry name" value="30S RIBOSOMAL PROTEIN S2 PROKARYOTIC AND ORGANELLAR"/>
    <property type="match status" value="1"/>
</dbReference>
<dbReference type="PANTHER" id="PTHR12534:SF0">
    <property type="entry name" value="SMALL RIBOSOMAL SUBUNIT PROTEIN US2M"/>
    <property type="match status" value="1"/>
</dbReference>
<dbReference type="Pfam" id="PF00318">
    <property type="entry name" value="Ribosomal_S2"/>
    <property type="match status" value="1"/>
</dbReference>
<dbReference type="PRINTS" id="PR00395">
    <property type="entry name" value="RIBOSOMALS2"/>
</dbReference>
<dbReference type="SUPFAM" id="SSF52313">
    <property type="entry name" value="Ribosomal protein S2"/>
    <property type="match status" value="1"/>
</dbReference>
<dbReference type="PROSITE" id="PS00962">
    <property type="entry name" value="RIBOSOMAL_S2_1"/>
    <property type="match status" value="1"/>
</dbReference>
<dbReference type="PROSITE" id="PS00963">
    <property type="entry name" value="RIBOSOMAL_S2_2"/>
    <property type="match status" value="1"/>
</dbReference>
<name>RS2_BRUME</name>
<accession>Q8YHH6</accession>
<reference key="1">
    <citation type="journal article" date="2002" name="Proc. Natl. Acad. Sci. U.S.A.">
        <title>The genome sequence of the facultative intracellular pathogen Brucella melitensis.</title>
        <authorList>
            <person name="DelVecchio V.G."/>
            <person name="Kapatral V."/>
            <person name="Redkar R.J."/>
            <person name="Patra G."/>
            <person name="Mujer C."/>
            <person name="Los T."/>
            <person name="Ivanova N."/>
            <person name="Anderson I."/>
            <person name="Bhattacharyya A."/>
            <person name="Lykidis A."/>
            <person name="Reznik G."/>
            <person name="Jablonski L."/>
            <person name="Larsen N."/>
            <person name="D'Souza M."/>
            <person name="Bernal A."/>
            <person name="Mazur M."/>
            <person name="Goltsman E."/>
            <person name="Selkov E."/>
            <person name="Elzer P.H."/>
            <person name="Hagius S."/>
            <person name="O'Callaghan D."/>
            <person name="Letesson J.-J."/>
            <person name="Haselkorn R."/>
            <person name="Kyrpides N.C."/>
            <person name="Overbeek R."/>
        </authorList>
    </citation>
    <scope>NUCLEOTIDE SEQUENCE [LARGE SCALE GENOMIC DNA]</scope>
    <source>
        <strain>ATCC 23456 / CCUG 17765 / NCTC 10094 / 16M</strain>
    </source>
</reference>